<accession>Q3AR26</accession>
<gene>
    <name evidence="1" type="primary">queA</name>
    <name type="ordered locus">Cag_1288</name>
</gene>
<organism>
    <name type="scientific">Chlorobium chlorochromatii (strain CaD3)</name>
    <dbReference type="NCBI Taxonomy" id="340177"/>
    <lineage>
        <taxon>Bacteria</taxon>
        <taxon>Pseudomonadati</taxon>
        <taxon>Chlorobiota</taxon>
        <taxon>Chlorobiia</taxon>
        <taxon>Chlorobiales</taxon>
        <taxon>Chlorobiaceae</taxon>
        <taxon>Chlorobium/Pelodictyon group</taxon>
        <taxon>Chlorobium</taxon>
    </lineage>
</organism>
<feature type="chain" id="PRO_0000231328" description="S-adenosylmethionine:tRNA ribosyltransferase-isomerase">
    <location>
        <begin position="1"/>
        <end position="341"/>
    </location>
</feature>
<comment type="function">
    <text evidence="1">Transfers and isomerizes the ribose moiety from AdoMet to the 7-aminomethyl group of 7-deazaguanine (preQ1-tRNA) to give epoxyqueuosine (oQ-tRNA).</text>
</comment>
<comment type="catalytic activity">
    <reaction evidence="1">
        <text>7-aminomethyl-7-carbaguanosine(34) in tRNA + S-adenosyl-L-methionine = epoxyqueuosine(34) in tRNA + adenine + L-methionine + 2 H(+)</text>
        <dbReference type="Rhea" id="RHEA:32155"/>
        <dbReference type="Rhea" id="RHEA-COMP:10342"/>
        <dbReference type="Rhea" id="RHEA-COMP:18582"/>
        <dbReference type="ChEBI" id="CHEBI:15378"/>
        <dbReference type="ChEBI" id="CHEBI:16708"/>
        <dbReference type="ChEBI" id="CHEBI:57844"/>
        <dbReference type="ChEBI" id="CHEBI:59789"/>
        <dbReference type="ChEBI" id="CHEBI:82833"/>
        <dbReference type="ChEBI" id="CHEBI:194443"/>
        <dbReference type="EC" id="2.4.99.17"/>
    </reaction>
</comment>
<comment type="pathway">
    <text evidence="1">tRNA modification; tRNA-queuosine biosynthesis.</text>
</comment>
<comment type="subunit">
    <text evidence="1">Monomer.</text>
</comment>
<comment type="subcellular location">
    <subcellularLocation>
        <location evidence="1">Cytoplasm</location>
    </subcellularLocation>
</comment>
<comment type="similarity">
    <text evidence="1">Belongs to the QueA family.</text>
</comment>
<evidence type="ECO:0000255" key="1">
    <source>
        <dbReference type="HAMAP-Rule" id="MF_00113"/>
    </source>
</evidence>
<sequence length="341" mass="37690">MQVADFDYHLPEERIAKYPPLERGSTRLLVLNRQSGALTHSLYAHLDTFLQAGDLLLLNNTRVVPARLFATRATGATIELMLLERHHHREQLVLYRGQLKAGEMLQSHGHTLLVEEVLPQGLARLALADGGDLHQFFTQFGSVPIPPYLKRNAEAVDRERYQTVFAAHSGSVAAPTASLNMTPELLQRLKNNGVEIAHITLHVGLGTFLPIRTESLEEHVMHRESYLLPAESVAALQRVKADGGRVVAVGTTVTRALEHSAPRILQSSAHAEIEGEADIFIYPGYRFQMVDLLLTNFHAPRSTVLMLTAACAGTDNLRAAYSEAVLQGYNFLSYGDSMLIC</sequence>
<name>QUEA_CHLCH</name>
<proteinExistence type="inferred from homology"/>
<reference key="1">
    <citation type="submission" date="2005-08" db="EMBL/GenBank/DDBJ databases">
        <title>Complete sequence of Chlorobium chlorochromatii CaD3.</title>
        <authorList>
            <consortium name="US DOE Joint Genome Institute"/>
            <person name="Copeland A."/>
            <person name="Lucas S."/>
            <person name="Lapidus A."/>
            <person name="Barry K."/>
            <person name="Detter J.C."/>
            <person name="Glavina T."/>
            <person name="Hammon N."/>
            <person name="Israni S."/>
            <person name="Pitluck S."/>
            <person name="Bryant D."/>
            <person name="Schmutz J."/>
            <person name="Larimer F."/>
            <person name="Land M."/>
            <person name="Kyrpides N."/>
            <person name="Ivanova N."/>
            <person name="Richardson P."/>
        </authorList>
    </citation>
    <scope>NUCLEOTIDE SEQUENCE [LARGE SCALE GENOMIC DNA]</scope>
    <source>
        <strain>CaD3</strain>
    </source>
</reference>
<dbReference type="EC" id="2.4.99.17" evidence="1"/>
<dbReference type="EMBL" id="CP000108">
    <property type="protein sequence ID" value="ABB28549.1"/>
    <property type="molecule type" value="Genomic_DNA"/>
</dbReference>
<dbReference type="SMR" id="Q3AR26"/>
<dbReference type="STRING" id="340177.Cag_1288"/>
<dbReference type="KEGG" id="cch:Cag_1288"/>
<dbReference type="eggNOG" id="COG0809">
    <property type="taxonomic scope" value="Bacteria"/>
</dbReference>
<dbReference type="HOGENOM" id="CLU_039110_1_0_10"/>
<dbReference type="OrthoDB" id="9805933at2"/>
<dbReference type="UniPathway" id="UPA00392"/>
<dbReference type="GO" id="GO:0005737">
    <property type="term" value="C:cytoplasm"/>
    <property type="evidence" value="ECO:0007669"/>
    <property type="project" value="UniProtKB-SubCell"/>
</dbReference>
<dbReference type="GO" id="GO:0051075">
    <property type="term" value="F:S-adenosylmethionine:tRNA ribosyltransferase-isomerase activity"/>
    <property type="evidence" value="ECO:0007669"/>
    <property type="project" value="UniProtKB-EC"/>
</dbReference>
<dbReference type="GO" id="GO:0008616">
    <property type="term" value="P:queuosine biosynthetic process"/>
    <property type="evidence" value="ECO:0007669"/>
    <property type="project" value="UniProtKB-UniRule"/>
</dbReference>
<dbReference type="GO" id="GO:0002099">
    <property type="term" value="P:tRNA wobble guanine modification"/>
    <property type="evidence" value="ECO:0007669"/>
    <property type="project" value="TreeGrafter"/>
</dbReference>
<dbReference type="Gene3D" id="2.40.10.240">
    <property type="entry name" value="QueA-like"/>
    <property type="match status" value="1"/>
</dbReference>
<dbReference type="Gene3D" id="3.40.1780.10">
    <property type="entry name" value="QueA-like"/>
    <property type="match status" value="1"/>
</dbReference>
<dbReference type="HAMAP" id="MF_00113">
    <property type="entry name" value="QueA"/>
    <property type="match status" value="1"/>
</dbReference>
<dbReference type="InterPro" id="IPR003699">
    <property type="entry name" value="QueA"/>
</dbReference>
<dbReference type="InterPro" id="IPR042118">
    <property type="entry name" value="QueA_dom1"/>
</dbReference>
<dbReference type="InterPro" id="IPR042119">
    <property type="entry name" value="QueA_dom2"/>
</dbReference>
<dbReference type="InterPro" id="IPR036100">
    <property type="entry name" value="QueA_sf"/>
</dbReference>
<dbReference type="NCBIfam" id="NF001140">
    <property type="entry name" value="PRK00147.1"/>
    <property type="match status" value="1"/>
</dbReference>
<dbReference type="NCBIfam" id="TIGR00113">
    <property type="entry name" value="queA"/>
    <property type="match status" value="1"/>
</dbReference>
<dbReference type="PANTHER" id="PTHR30307">
    <property type="entry name" value="S-ADENOSYLMETHIONINE:TRNA RIBOSYLTRANSFERASE-ISOMERASE"/>
    <property type="match status" value="1"/>
</dbReference>
<dbReference type="PANTHER" id="PTHR30307:SF0">
    <property type="entry name" value="S-ADENOSYLMETHIONINE:TRNA RIBOSYLTRANSFERASE-ISOMERASE"/>
    <property type="match status" value="1"/>
</dbReference>
<dbReference type="Pfam" id="PF02547">
    <property type="entry name" value="Queuosine_synth"/>
    <property type="match status" value="1"/>
</dbReference>
<dbReference type="SUPFAM" id="SSF111337">
    <property type="entry name" value="QueA-like"/>
    <property type="match status" value="1"/>
</dbReference>
<keyword id="KW-0963">Cytoplasm</keyword>
<keyword id="KW-0671">Queuosine biosynthesis</keyword>
<keyword id="KW-0949">S-adenosyl-L-methionine</keyword>
<keyword id="KW-0808">Transferase</keyword>
<protein>
    <recommendedName>
        <fullName evidence="1">S-adenosylmethionine:tRNA ribosyltransferase-isomerase</fullName>
        <ecNumber evidence="1">2.4.99.17</ecNumber>
    </recommendedName>
    <alternativeName>
        <fullName evidence="1">Queuosine biosynthesis protein QueA</fullName>
    </alternativeName>
</protein>